<comment type="function">
    <text evidence="1">Catalyzes the formation of 6,7-dimethyl-8-ribityllumazine by condensation of 5-amino-6-(D-ribitylamino)uracil with 3,4-dihydroxy-2-butanone 4-phosphate. This is the penultimate step in the biosynthesis of riboflavin.</text>
</comment>
<comment type="catalytic activity">
    <reaction evidence="1">
        <text>(2S)-2-hydroxy-3-oxobutyl phosphate + 5-amino-6-(D-ribitylamino)uracil = 6,7-dimethyl-8-(1-D-ribityl)lumazine + phosphate + 2 H2O + H(+)</text>
        <dbReference type="Rhea" id="RHEA:26152"/>
        <dbReference type="ChEBI" id="CHEBI:15377"/>
        <dbReference type="ChEBI" id="CHEBI:15378"/>
        <dbReference type="ChEBI" id="CHEBI:15934"/>
        <dbReference type="ChEBI" id="CHEBI:43474"/>
        <dbReference type="ChEBI" id="CHEBI:58201"/>
        <dbReference type="ChEBI" id="CHEBI:58830"/>
        <dbReference type="EC" id="2.5.1.78"/>
    </reaction>
</comment>
<comment type="pathway">
    <text evidence="1">Cofactor biosynthesis; riboflavin biosynthesis; riboflavin from 2-hydroxy-3-oxobutyl phosphate and 5-amino-6-(D-ribitylamino)uracil: step 1/2.</text>
</comment>
<comment type="subunit">
    <text evidence="1">Forms an icosahedral capsid composed of 60 subunits, arranged as a dodecamer of pentamers.</text>
</comment>
<comment type="similarity">
    <text evidence="1">Belongs to the DMRL synthase family.</text>
</comment>
<evidence type="ECO:0000255" key="1">
    <source>
        <dbReference type="HAMAP-Rule" id="MF_00178"/>
    </source>
</evidence>
<reference key="1">
    <citation type="submission" date="2009-02" db="EMBL/GenBank/DDBJ databases">
        <title>Genome sequence of Bacillus cereus 03BB102.</title>
        <authorList>
            <person name="Dodson R.J."/>
            <person name="Jackson P."/>
            <person name="Munk A.C."/>
            <person name="Brettin T."/>
            <person name="Bruce D."/>
            <person name="Detter C."/>
            <person name="Tapia R."/>
            <person name="Han C."/>
            <person name="Sutton G."/>
            <person name="Sims D."/>
        </authorList>
    </citation>
    <scope>NUCLEOTIDE SEQUENCE [LARGE SCALE GENOMIC DNA]</scope>
    <source>
        <strain>03BB102</strain>
    </source>
</reference>
<accession>C1EQY6</accession>
<name>RISB_BACC3</name>
<proteinExistence type="inferred from homology"/>
<sequence length="153" mass="16246">MVFEGHLVGTGLKVGVVVGRFNEFITSKLLGGALDGLKRHGVEENDIDVAWVPGAFEIPLIAKKMANSGKYDAVITLGTVIRGATTHYDYVCNEVAKGVASLSLQTDIPVIFGVLTTETIEQAIERAGTKAGNKGYESAVAAIEMAHLSKQWA</sequence>
<organism>
    <name type="scientific">Bacillus cereus (strain 03BB102)</name>
    <dbReference type="NCBI Taxonomy" id="572264"/>
    <lineage>
        <taxon>Bacteria</taxon>
        <taxon>Bacillati</taxon>
        <taxon>Bacillota</taxon>
        <taxon>Bacilli</taxon>
        <taxon>Bacillales</taxon>
        <taxon>Bacillaceae</taxon>
        <taxon>Bacillus</taxon>
        <taxon>Bacillus cereus group</taxon>
    </lineage>
</organism>
<dbReference type="EC" id="2.5.1.78" evidence="1"/>
<dbReference type="EMBL" id="CP001407">
    <property type="protein sequence ID" value="ACO26310.1"/>
    <property type="molecule type" value="Genomic_DNA"/>
</dbReference>
<dbReference type="RefSeq" id="WP_000230892.1">
    <property type="nucleotide sequence ID" value="NZ_CP009318.1"/>
</dbReference>
<dbReference type="SMR" id="C1EQY6"/>
<dbReference type="GeneID" id="87592219"/>
<dbReference type="KEGG" id="bcx:BCA_4225"/>
<dbReference type="PATRIC" id="fig|572264.18.peg.4176"/>
<dbReference type="UniPathway" id="UPA00275">
    <property type="reaction ID" value="UER00404"/>
</dbReference>
<dbReference type="Proteomes" id="UP000002210">
    <property type="component" value="Chromosome"/>
</dbReference>
<dbReference type="GO" id="GO:0005829">
    <property type="term" value="C:cytosol"/>
    <property type="evidence" value="ECO:0007669"/>
    <property type="project" value="TreeGrafter"/>
</dbReference>
<dbReference type="GO" id="GO:0009349">
    <property type="term" value="C:riboflavin synthase complex"/>
    <property type="evidence" value="ECO:0007669"/>
    <property type="project" value="InterPro"/>
</dbReference>
<dbReference type="GO" id="GO:0000906">
    <property type="term" value="F:6,7-dimethyl-8-ribityllumazine synthase activity"/>
    <property type="evidence" value="ECO:0007669"/>
    <property type="project" value="UniProtKB-UniRule"/>
</dbReference>
<dbReference type="GO" id="GO:0009231">
    <property type="term" value="P:riboflavin biosynthetic process"/>
    <property type="evidence" value="ECO:0007669"/>
    <property type="project" value="UniProtKB-UniRule"/>
</dbReference>
<dbReference type="CDD" id="cd09209">
    <property type="entry name" value="Lumazine_synthase-I"/>
    <property type="match status" value="1"/>
</dbReference>
<dbReference type="FunFam" id="3.40.50.960:FF:000001">
    <property type="entry name" value="6,7-dimethyl-8-ribityllumazine synthase"/>
    <property type="match status" value="1"/>
</dbReference>
<dbReference type="Gene3D" id="3.40.50.960">
    <property type="entry name" value="Lumazine/riboflavin synthase"/>
    <property type="match status" value="1"/>
</dbReference>
<dbReference type="HAMAP" id="MF_00178">
    <property type="entry name" value="Lumazine_synth"/>
    <property type="match status" value="1"/>
</dbReference>
<dbReference type="InterPro" id="IPR034964">
    <property type="entry name" value="LS"/>
</dbReference>
<dbReference type="InterPro" id="IPR002180">
    <property type="entry name" value="LS/RS"/>
</dbReference>
<dbReference type="InterPro" id="IPR036467">
    <property type="entry name" value="LS/RS_sf"/>
</dbReference>
<dbReference type="NCBIfam" id="TIGR00114">
    <property type="entry name" value="lumazine-synth"/>
    <property type="match status" value="1"/>
</dbReference>
<dbReference type="NCBIfam" id="NF000812">
    <property type="entry name" value="PRK00061.1-4"/>
    <property type="match status" value="1"/>
</dbReference>
<dbReference type="PANTHER" id="PTHR21058:SF0">
    <property type="entry name" value="6,7-DIMETHYL-8-RIBITYLLUMAZINE SYNTHASE"/>
    <property type="match status" value="1"/>
</dbReference>
<dbReference type="PANTHER" id="PTHR21058">
    <property type="entry name" value="6,7-DIMETHYL-8-RIBITYLLUMAZINE SYNTHASE DMRL SYNTHASE LUMAZINE SYNTHASE"/>
    <property type="match status" value="1"/>
</dbReference>
<dbReference type="Pfam" id="PF00885">
    <property type="entry name" value="DMRL_synthase"/>
    <property type="match status" value="1"/>
</dbReference>
<dbReference type="SUPFAM" id="SSF52121">
    <property type="entry name" value="Lumazine synthase"/>
    <property type="match status" value="1"/>
</dbReference>
<gene>
    <name evidence="1" type="primary">ribH</name>
    <name type="ordered locus">BCA_4225</name>
</gene>
<feature type="chain" id="PRO_1000195457" description="6,7-dimethyl-8-ribityllumazine synthase">
    <location>
        <begin position="1"/>
        <end position="153"/>
    </location>
</feature>
<feature type="active site" description="Proton donor" evidence="1">
    <location>
        <position position="87"/>
    </location>
</feature>
<feature type="binding site" evidence="1">
    <location>
        <position position="21"/>
    </location>
    <ligand>
        <name>5-amino-6-(D-ribitylamino)uracil</name>
        <dbReference type="ChEBI" id="CHEBI:15934"/>
    </ligand>
</feature>
<feature type="binding site" evidence="1">
    <location>
        <begin position="55"/>
        <end position="57"/>
    </location>
    <ligand>
        <name>5-amino-6-(D-ribitylamino)uracil</name>
        <dbReference type="ChEBI" id="CHEBI:15934"/>
    </ligand>
</feature>
<feature type="binding site" evidence="1">
    <location>
        <begin position="79"/>
        <end position="81"/>
    </location>
    <ligand>
        <name>5-amino-6-(D-ribitylamino)uracil</name>
        <dbReference type="ChEBI" id="CHEBI:15934"/>
    </ligand>
</feature>
<feature type="binding site" evidence="1">
    <location>
        <begin position="84"/>
        <end position="85"/>
    </location>
    <ligand>
        <name>(2S)-2-hydroxy-3-oxobutyl phosphate</name>
        <dbReference type="ChEBI" id="CHEBI:58830"/>
    </ligand>
</feature>
<feature type="binding site" evidence="1">
    <location>
        <position position="112"/>
    </location>
    <ligand>
        <name>5-amino-6-(D-ribitylamino)uracil</name>
        <dbReference type="ChEBI" id="CHEBI:15934"/>
    </ligand>
</feature>
<feature type="binding site" evidence="1">
    <location>
        <position position="126"/>
    </location>
    <ligand>
        <name>(2S)-2-hydroxy-3-oxobutyl phosphate</name>
        <dbReference type="ChEBI" id="CHEBI:58830"/>
    </ligand>
</feature>
<keyword id="KW-0686">Riboflavin biosynthesis</keyword>
<keyword id="KW-0808">Transferase</keyword>
<protein>
    <recommendedName>
        <fullName evidence="1">6,7-dimethyl-8-ribityllumazine synthase</fullName>
        <shortName evidence="1">DMRL synthase</shortName>
        <shortName evidence="1">LS</shortName>
        <shortName evidence="1">Lumazine synthase</shortName>
        <ecNumber evidence="1">2.5.1.78</ecNumber>
    </recommendedName>
</protein>